<evidence type="ECO:0000250" key="1">
    <source>
        <dbReference type="UniProtKB" id="Q9NVA1"/>
    </source>
</evidence>
<evidence type="ECO:0000305" key="2"/>
<feature type="chain" id="PRO_0000206562" description="Ubiquinol-cytochrome-c reductase complex assembly factor 1">
    <location>
        <begin position="1"/>
        <end position="200"/>
    </location>
</feature>
<keyword id="KW-0472">Membrane</keyword>
<keyword id="KW-0496">Mitochondrion</keyword>
<keyword id="KW-0999">Mitochondrion inner membrane</keyword>
<keyword id="KW-1185">Reference proteome</keyword>
<name>UQCC1_XENLA</name>
<organism>
    <name type="scientific">Xenopus laevis</name>
    <name type="common">African clawed frog</name>
    <dbReference type="NCBI Taxonomy" id="8355"/>
    <lineage>
        <taxon>Eukaryota</taxon>
        <taxon>Metazoa</taxon>
        <taxon>Chordata</taxon>
        <taxon>Craniata</taxon>
        <taxon>Vertebrata</taxon>
        <taxon>Euteleostomi</taxon>
        <taxon>Amphibia</taxon>
        <taxon>Batrachia</taxon>
        <taxon>Anura</taxon>
        <taxon>Pipoidea</taxon>
        <taxon>Pipidae</taxon>
        <taxon>Xenopodinae</taxon>
        <taxon>Xenopus</taxon>
        <taxon>Xenopus</taxon>
    </lineage>
</organism>
<comment type="function">
    <text evidence="1">Required for the assembly of the ubiquinol-cytochrome c reductase complex (mitochondrial respiratory chain complex III or cytochrome b-c1 complex). May be involved in cytochrome b translation and/or stability.</text>
</comment>
<comment type="subcellular location">
    <subcellularLocation>
        <location evidence="1">Mitochondrion inner membrane</location>
    </subcellularLocation>
</comment>
<comment type="similarity">
    <text evidence="2">Belongs to the CBP3 family.</text>
</comment>
<gene>
    <name type="primary">uqcc1</name>
    <name type="synonym">bfzb</name>
    <name type="synonym">uqcc</name>
</gene>
<accession>Q9W6I0</accession>
<protein>
    <recommendedName>
        <fullName>Ubiquinol-cytochrome-c reductase complex assembly factor 1</fullName>
    </recommendedName>
    <alternativeName>
        <fullName>Basic FGF-repressed Zic-binding protein homolog</fullName>
    </alternativeName>
    <alternativeName>
        <fullName>Ubiquinol-cytochrome c reductase complex chaperone CBP3 homolog</fullName>
    </alternativeName>
    <alternativeName>
        <fullName>Zic3-binding protein</fullName>
    </alternativeName>
</protein>
<reference key="1">
    <citation type="submission" date="1999-02" db="EMBL/GenBank/DDBJ databases">
        <title>Molecular cloning of the Xenopus cDNA encoding Zic3 binding protein using yeast two-hybrid system.</title>
        <authorList>
            <person name="Huang Y.K."/>
            <person name="Chen H.-D."/>
            <person name="Kim J."/>
            <person name="Kung H.-F."/>
        </authorList>
    </citation>
    <scope>NUCLEOTIDE SEQUENCE [MRNA]</scope>
</reference>
<proteinExistence type="evidence at transcript level"/>
<sequence length="200" mass="23372">MGFTGPLKYNKWKIKIAALRMYTCCVERIDYDEFFEKCSLPDTLNSWFLVTQLHVWMCLVRMKQEGRAGKYMCRYIVHSMWEDVEQRGKVMGIDSVTLKNSMRSMTEIFYAAIFGYDEGIISDDRILAAALWRNLLNKQCDDPRKLELLVEYVRKQVQFLDTLDGEDLLLTGEVVWRPLVEKDAQSILKPSTPTYNDEGL</sequence>
<dbReference type="EMBL" id="AF129131">
    <property type="protein sequence ID" value="AAD22979.1"/>
    <property type="molecule type" value="mRNA"/>
</dbReference>
<dbReference type="SMR" id="Q9W6I0"/>
<dbReference type="AGR" id="Xenbase:XB-GENE-6251942"/>
<dbReference type="Xenbase" id="XB-GENE-6251942">
    <property type="gene designation" value="uqcc1.S"/>
</dbReference>
<dbReference type="OrthoDB" id="4007at2759"/>
<dbReference type="Proteomes" id="UP000186698">
    <property type="component" value="Unplaced"/>
</dbReference>
<dbReference type="GO" id="GO:0005743">
    <property type="term" value="C:mitochondrial inner membrane"/>
    <property type="evidence" value="ECO:0000250"/>
    <property type="project" value="UniProtKB"/>
</dbReference>
<dbReference type="GO" id="GO:0005739">
    <property type="term" value="C:mitochondrion"/>
    <property type="evidence" value="ECO:0000318"/>
    <property type="project" value="GO_Central"/>
</dbReference>
<dbReference type="GO" id="GO:0034551">
    <property type="term" value="P:mitochondrial respiratory chain complex III assembly"/>
    <property type="evidence" value="ECO:0000250"/>
    <property type="project" value="UniProtKB"/>
</dbReference>
<dbReference type="InterPro" id="IPR021150">
    <property type="entry name" value="Ubiq_cyt_c_chap"/>
</dbReference>
<dbReference type="InterPro" id="IPR007129">
    <property type="entry name" value="Ubiqinol_cyt_c_chaperone_CPB3"/>
</dbReference>
<dbReference type="PANTHER" id="PTHR12184">
    <property type="entry name" value="UBIQUINOL-CYTOCHROME C REDUCTASE COMPLEX ASSEMBLY FACTOR 1 FAMILY MEMBER"/>
    <property type="match status" value="1"/>
</dbReference>
<dbReference type="PANTHER" id="PTHR12184:SF1">
    <property type="entry name" value="UBIQUINOL-CYTOCHROME-C REDUCTASE COMPLEX ASSEMBLY FACTOR 1"/>
    <property type="match status" value="1"/>
</dbReference>
<dbReference type="Pfam" id="PF03981">
    <property type="entry name" value="Ubiq_cyt_C_chap"/>
    <property type="match status" value="1"/>
</dbReference>